<sequence>MLLKELSSLASPLSQPQVEKLKQLTAELNAVQLAWVSGYLAATANASGNLAQLAPVSDAPAAQTVTILYGSQTGNGRGIAKALAEKAKAQGYSVNLASMGEYNVRQLKQETLLLLVVSTHGEGEAPDDAIELHKFLASKRAPQLNNLHYSVLALGDSSYEFFCQTGKDFDARLSALGAKALLPLVECDVDYEAAAGQWHADVLTAVKPLIQTTANVVALNDTGSAQVASESEFTKQNPYSAEVLVSQKITGRGSDRDVRHVEIDLGESGLRYEVGDALGVWFSNNETLVDEILAGLGLAADATVTVGNESINLKQALIEKKELTQLYPGLVKAWAELSASPELLAISEDKEQVRQFILHHQFADLVANYQLKADANLDANKLVELLRPLTPRLYSIASSQSEVDTEVHLTVALVEDEHQGQARFGGASHFLASAEEGAEVKVYVEPNKHFRLPEDPQTPVIMIGPGTGVAPFRAFMQERVAQGAEGDSWLFFGNPHFEQDFLYQTEWQQYLKNGDLTRIDVAFSRDQAHKIYVQHRIKEQGQTLWQWLQNGAHLYICGDAERMAKDVHQALLAVAVEFGGLSSEAAEEYFETLRSHKRYQKDVY</sequence>
<evidence type="ECO:0000255" key="1">
    <source>
        <dbReference type="HAMAP-Rule" id="MF_01541"/>
    </source>
</evidence>
<keyword id="KW-0028">Amino-acid biosynthesis</keyword>
<keyword id="KW-0198">Cysteine biosynthesis</keyword>
<keyword id="KW-0249">Electron transport</keyword>
<keyword id="KW-0274">FAD</keyword>
<keyword id="KW-0285">Flavoprotein</keyword>
<keyword id="KW-0288">FMN</keyword>
<keyword id="KW-0521">NADP</keyword>
<keyword id="KW-0560">Oxidoreductase</keyword>
<keyword id="KW-0813">Transport</keyword>
<accession>A0KTH4</accession>
<reference key="1">
    <citation type="submission" date="2006-09" db="EMBL/GenBank/DDBJ databases">
        <title>Complete sequence of chromosome 1 of Shewanella sp. ANA-3.</title>
        <authorList>
            <person name="Copeland A."/>
            <person name="Lucas S."/>
            <person name="Lapidus A."/>
            <person name="Barry K."/>
            <person name="Detter J.C."/>
            <person name="Glavina del Rio T."/>
            <person name="Hammon N."/>
            <person name="Israni S."/>
            <person name="Dalin E."/>
            <person name="Tice H."/>
            <person name="Pitluck S."/>
            <person name="Chertkov O."/>
            <person name="Brettin T."/>
            <person name="Bruce D."/>
            <person name="Han C."/>
            <person name="Tapia R."/>
            <person name="Gilna P."/>
            <person name="Schmutz J."/>
            <person name="Larimer F."/>
            <person name="Land M."/>
            <person name="Hauser L."/>
            <person name="Kyrpides N."/>
            <person name="Kim E."/>
            <person name="Newman D."/>
            <person name="Salticov C."/>
            <person name="Konstantinidis K."/>
            <person name="Klappenback J."/>
            <person name="Tiedje J."/>
            <person name="Richardson P."/>
        </authorList>
    </citation>
    <scope>NUCLEOTIDE SEQUENCE [LARGE SCALE GENOMIC DNA]</scope>
    <source>
        <strain>ANA-3</strain>
    </source>
</reference>
<dbReference type="EC" id="1.8.1.2" evidence="1"/>
<dbReference type="EMBL" id="CP000469">
    <property type="protein sequence ID" value="ABK47093.1"/>
    <property type="molecule type" value="Genomic_DNA"/>
</dbReference>
<dbReference type="RefSeq" id="WP_011715996.1">
    <property type="nucleotide sequence ID" value="NC_008577.1"/>
</dbReference>
<dbReference type="SMR" id="A0KTH4"/>
<dbReference type="STRING" id="94122.Shewana3_0855"/>
<dbReference type="KEGG" id="shn:Shewana3_0855"/>
<dbReference type="eggNOG" id="COG0369">
    <property type="taxonomic scope" value="Bacteria"/>
</dbReference>
<dbReference type="HOGENOM" id="CLU_001570_17_7_6"/>
<dbReference type="OrthoDB" id="9816402at2"/>
<dbReference type="UniPathway" id="UPA00140">
    <property type="reaction ID" value="UER00207"/>
</dbReference>
<dbReference type="Proteomes" id="UP000002589">
    <property type="component" value="Chromosome"/>
</dbReference>
<dbReference type="GO" id="GO:0005829">
    <property type="term" value="C:cytosol"/>
    <property type="evidence" value="ECO:0007669"/>
    <property type="project" value="TreeGrafter"/>
</dbReference>
<dbReference type="GO" id="GO:0050660">
    <property type="term" value="F:flavin adenine dinucleotide binding"/>
    <property type="evidence" value="ECO:0007669"/>
    <property type="project" value="InterPro"/>
</dbReference>
<dbReference type="GO" id="GO:0010181">
    <property type="term" value="F:FMN binding"/>
    <property type="evidence" value="ECO:0007669"/>
    <property type="project" value="InterPro"/>
</dbReference>
<dbReference type="GO" id="GO:0004783">
    <property type="term" value="F:sulfite reductase (NADPH) activity"/>
    <property type="evidence" value="ECO:0007669"/>
    <property type="project" value="UniProtKB-UniRule"/>
</dbReference>
<dbReference type="GO" id="GO:0019344">
    <property type="term" value="P:cysteine biosynthetic process"/>
    <property type="evidence" value="ECO:0007669"/>
    <property type="project" value="UniProtKB-KW"/>
</dbReference>
<dbReference type="GO" id="GO:0070814">
    <property type="term" value="P:hydrogen sulfide biosynthetic process"/>
    <property type="evidence" value="ECO:0007669"/>
    <property type="project" value="UniProtKB-UniRule"/>
</dbReference>
<dbReference type="GO" id="GO:0000103">
    <property type="term" value="P:sulfate assimilation"/>
    <property type="evidence" value="ECO:0007669"/>
    <property type="project" value="UniProtKB-UniRule"/>
</dbReference>
<dbReference type="CDD" id="cd06199">
    <property type="entry name" value="SiR"/>
    <property type="match status" value="1"/>
</dbReference>
<dbReference type="FunFam" id="3.40.50.80:FF:000001">
    <property type="entry name" value="NADPH--cytochrome P450 reductase 1"/>
    <property type="match status" value="1"/>
</dbReference>
<dbReference type="FunFam" id="3.40.50.360:FF:000018">
    <property type="entry name" value="Sulfite reductase [NADPH] flavoprotein alpha-component"/>
    <property type="match status" value="1"/>
</dbReference>
<dbReference type="Gene3D" id="3.40.50.360">
    <property type="match status" value="1"/>
</dbReference>
<dbReference type="Gene3D" id="1.20.990.10">
    <property type="entry name" value="NADPH-cytochrome p450 Reductase, Chain A, domain 3"/>
    <property type="match status" value="1"/>
</dbReference>
<dbReference type="Gene3D" id="3.40.50.80">
    <property type="entry name" value="Nucleotide-binding domain of ferredoxin-NADP reductase (FNR) module"/>
    <property type="match status" value="1"/>
</dbReference>
<dbReference type="Gene3D" id="2.40.30.10">
    <property type="entry name" value="Translation factors"/>
    <property type="match status" value="1"/>
</dbReference>
<dbReference type="HAMAP" id="MF_01541">
    <property type="entry name" value="CysJ"/>
    <property type="match status" value="1"/>
</dbReference>
<dbReference type="InterPro" id="IPR010199">
    <property type="entry name" value="CysJ"/>
</dbReference>
<dbReference type="InterPro" id="IPR003097">
    <property type="entry name" value="CysJ-like_FAD-binding"/>
</dbReference>
<dbReference type="InterPro" id="IPR029758">
    <property type="entry name" value="CysJ_Proteobact"/>
</dbReference>
<dbReference type="InterPro" id="IPR017927">
    <property type="entry name" value="FAD-bd_FR_type"/>
</dbReference>
<dbReference type="InterPro" id="IPR001094">
    <property type="entry name" value="Flavdoxin-like"/>
</dbReference>
<dbReference type="InterPro" id="IPR008254">
    <property type="entry name" value="Flavodoxin/NO_synth"/>
</dbReference>
<dbReference type="InterPro" id="IPR001709">
    <property type="entry name" value="Flavoprot_Pyr_Nucl_cyt_Rdtase"/>
</dbReference>
<dbReference type="InterPro" id="IPR029039">
    <property type="entry name" value="Flavoprotein-like_sf"/>
</dbReference>
<dbReference type="InterPro" id="IPR039261">
    <property type="entry name" value="FNR_nucleotide-bd"/>
</dbReference>
<dbReference type="InterPro" id="IPR023173">
    <property type="entry name" value="NADPH_Cyt_P450_Rdtase_alpha"/>
</dbReference>
<dbReference type="InterPro" id="IPR001433">
    <property type="entry name" value="OxRdtase_FAD/NAD-bd"/>
</dbReference>
<dbReference type="InterPro" id="IPR017938">
    <property type="entry name" value="Riboflavin_synthase-like_b-brl"/>
</dbReference>
<dbReference type="NCBIfam" id="TIGR01931">
    <property type="entry name" value="cysJ"/>
    <property type="match status" value="1"/>
</dbReference>
<dbReference type="PANTHER" id="PTHR19384:SF128">
    <property type="entry name" value="NADPH OXIDOREDUCTASE A"/>
    <property type="match status" value="1"/>
</dbReference>
<dbReference type="PANTHER" id="PTHR19384">
    <property type="entry name" value="NITRIC OXIDE SYNTHASE-RELATED"/>
    <property type="match status" value="1"/>
</dbReference>
<dbReference type="Pfam" id="PF00667">
    <property type="entry name" value="FAD_binding_1"/>
    <property type="match status" value="1"/>
</dbReference>
<dbReference type="Pfam" id="PF00258">
    <property type="entry name" value="Flavodoxin_1"/>
    <property type="match status" value="1"/>
</dbReference>
<dbReference type="Pfam" id="PF00175">
    <property type="entry name" value="NAD_binding_1"/>
    <property type="match status" value="1"/>
</dbReference>
<dbReference type="PIRSF" id="PIRSF000207">
    <property type="entry name" value="SiR-FP_CysJ"/>
    <property type="match status" value="1"/>
</dbReference>
<dbReference type="PRINTS" id="PR00369">
    <property type="entry name" value="FLAVODOXIN"/>
</dbReference>
<dbReference type="PRINTS" id="PR00371">
    <property type="entry name" value="FPNCR"/>
</dbReference>
<dbReference type="SUPFAM" id="SSF52343">
    <property type="entry name" value="Ferredoxin reductase-like, C-terminal NADP-linked domain"/>
    <property type="match status" value="1"/>
</dbReference>
<dbReference type="SUPFAM" id="SSF52218">
    <property type="entry name" value="Flavoproteins"/>
    <property type="match status" value="1"/>
</dbReference>
<dbReference type="SUPFAM" id="SSF63380">
    <property type="entry name" value="Riboflavin synthase domain-like"/>
    <property type="match status" value="1"/>
</dbReference>
<dbReference type="PROSITE" id="PS51384">
    <property type="entry name" value="FAD_FR"/>
    <property type="match status" value="1"/>
</dbReference>
<dbReference type="PROSITE" id="PS50902">
    <property type="entry name" value="FLAVODOXIN_LIKE"/>
    <property type="match status" value="1"/>
</dbReference>
<gene>
    <name evidence="1" type="primary">cysJ</name>
    <name type="ordered locus">Shewana3_0855</name>
</gene>
<organism>
    <name type="scientific">Shewanella sp. (strain ANA-3)</name>
    <dbReference type="NCBI Taxonomy" id="94122"/>
    <lineage>
        <taxon>Bacteria</taxon>
        <taxon>Pseudomonadati</taxon>
        <taxon>Pseudomonadota</taxon>
        <taxon>Gammaproteobacteria</taxon>
        <taxon>Alteromonadales</taxon>
        <taxon>Shewanellaceae</taxon>
        <taxon>Shewanella</taxon>
    </lineage>
</organism>
<protein>
    <recommendedName>
        <fullName evidence="1">Sulfite reductase [NADPH] flavoprotein alpha-component</fullName>
        <shortName evidence="1">SiR-FP</shortName>
        <ecNumber evidence="1">1.8.1.2</ecNumber>
    </recommendedName>
</protein>
<comment type="function">
    <text evidence="1">Component of the sulfite reductase complex that catalyzes the 6-electron reduction of sulfite to sulfide. This is one of several activities required for the biosynthesis of L-cysteine from sulfate. The flavoprotein component catalyzes the electron flow from NADPH -&gt; FAD -&gt; FMN to the hemoprotein component.</text>
</comment>
<comment type="catalytic activity">
    <reaction evidence="1">
        <text>hydrogen sulfide + 3 NADP(+) + 3 H2O = sulfite + 3 NADPH + 4 H(+)</text>
        <dbReference type="Rhea" id="RHEA:13801"/>
        <dbReference type="ChEBI" id="CHEBI:15377"/>
        <dbReference type="ChEBI" id="CHEBI:15378"/>
        <dbReference type="ChEBI" id="CHEBI:17359"/>
        <dbReference type="ChEBI" id="CHEBI:29919"/>
        <dbReference type="ChEBI" id="CHEBI:57783"/>
        <dbReference type="ChEBI" id="CHEBI:58349"/>
        <dbReference type="EC" id="1.8.1.2"/>
    </reaction>
</comment>
<comment type="cofactor">
    <cofactor evidence="1">
        <name>FAD</name>
        <dbReference type="ChEBI" id="CHEBI:57692"/>
    </cofactor>
    <text evidence="1">Binds 1 FAD per subunit.</text>
</comment>
<comment type="cofactor">
    <cofactor evidence="1">
        <name>FMN</name>
        <dbReference type="ChEBI" id="CHEBI:58210"/>
    </cofactor>
    <text evidence="1">Binds 1 FMN per subunit.</text>
</comment>
<comment type="pathway">
    <text evidence="1">Sulfur metabolism; hydrogen sulfide biosynthesis; hydrogen sulfide from sulfite (NADPH route): step 1/1.</text>
</comment>
<comment type="subunit">
    <text evidence="1">Alpha(8)-beta(8). The alpha component is a flavoprotein, the beta component is a hemoprotein.</text>
</comment>
<comment type="similarity">
    <text evidence="1">Belongs to the NADPH-dependent sulphite reductase flavoprotein subunit CysJ family.</text>
</comment>
<comment type="similarity">
    <text evidence="1">In the N-terminal section; belongs to the flavodoxin family.</text>
</comment>
<comment type="similarity">
    <text evidence="1">In the C-terminal section; belongs to the flavoprotein pyridine nucleotide cytochrome reductase family.</text>
</comment>
<proteinExistence type="inferred from homology"/>
<name>CYSJ_SHESA</name>
<feature type="chain" id="PRO_0000292970" description="Sulfite reductase [NADPH] flavoprotein alpha-component">
    <location>
        <begin position="1"/>
        <end position="604"/>
    </location>
</feature>
<feature type="domain" description="Flavodoxin-like" evidence="1">
    <location>
        <begin position="65"/>
        <end position="203"/>
    </location>
</feature>
<feature type="domain" description="FAD-binding FR-type" evidence="1">
    <location>
        <begin position="236"/>
        <end position="453"/>
    </location>
</feature>
<feature type="binding site" evidence="1">
    <location>
        <begin position="71"/>
        <end position="76"/>
    </location>
    <ligand>
        <name>FMN</name>
        <dbReference type="ChEBI" id="CHEBI:58210"/>
    </ligand>
</feature>
<feature type="binding site" evidence="1">
    <location>
        <begin position="118"/>
        <end position="121"/>
    </location>
    <ligand>
        <name>FMN</name>
        <dbReference type="ChEBI" id="CHEBI:58210"/>
    </ligand>
</feature>
<feature type="binding site" evidence="1">
    <location>
        <begin position="154"/>
        <end position="163"/>
    </location>
    <ligand>
        <name>FMN</name>
        <dbReference type="ChEBI" id="CHEBI:58210"/>
    </ligand>
</feature>
<feature type="binding site" evidence="1">
    <location>
        <position position="324"/>
    </location>
    <ligand>
        <name>FAD</name>
        <dbReference type="ChEBI" id="CHEBI:57692"/>
    </ligand>
</feature>
<feature type="binding site" evidence="1">
    <location>
        <position position="358"/>
    </location>
    <ligand>
        <name>FAD</name>
        <dbReference type="ChEBI" id="CHEBI:57692"/>
    </ligand>
</feature>
<feature type="binding site" evidence="1">
    <location>
        <begin position="392"/>
        <end position="395"/>
    </location>
    <ligand>
        <name>FAD</name>
        <dbReference type="ChEBI" id="CHEBI:57692"/>
    </ligand>
</feature>
<feature type="binding site" evidence="1">
    <location>
        <begin position="410"/>
        <end position="412"/>
    </location>
    <ligand>
        <name>FAD</name>
        <dbReference type="ChEBI" id="CHEBI:57692"/>
    </ligand>
</feature>
<feature type="binding site" evidence="1">
    <location>
        <begin position="425"/>
        <end position="428"/>
    </location>
    <ligand>
        <name>FAD</name>
        <dbReference type="ChEBI" id="CHEBI:57692"/>
    </ligand>
</feature>
<feature type="binding site" evidence="1">
    <location>
        <begin position="524"/>
        <end position="525"/>
    </location>
    <ligand>
        <name>NADP(+)</name>
        <dbReference type="ChEBI" id="CHEBI:58349"/>
    </ligand>
</feature>
<feature type="binding site" evidence="1">
    <location>
        <begin position="530"/>
        <end position="534"/>
    </location>
    <ligand>
        <name>NADP(+)</name>
        <dbReference type="ChEBI" id="CHEBI:58349"/>
    </ligand>
</feature>
<feature type="binding site" evidence="1">
    <location>
        <position position="566"/>
    </location>
    <ligand>
        <name>NADP(+)</name>
        <dbReference type="ChEBI" id="CHEBI:58349"/>
    </ligand>
</feature>
<feature type="binding site" evidence="1">
    <location>
        <position position="604"/>
    </location>
    <ligand>
        <name>FAD</name>
        <dbReference type="ChEBI" id="CHEBI:57692"/>
    </ligand>
</feature>